<dbReference type="PIR" id="S41611">
    <property type="entry name" value="S41611"/>
</dbReference>
<dbReference type="SMR" id="P38941"/>
<dbReference type="GO" id="GO:0051539">
    <property type="term" value="F:4 iron, 4 sulfur cluster binding"/>
    <property type="evidence" value="ECO:0007669"/>
    <property type="project" value="UniProtKB-KW"/>
</dbReference>
<dbReference type="GO" id="GO:0009055">
    <property type="term" value="F:electron transfer activity"/>
    <property type="evidence" value="ECO:0007669"/>
    <property type="project" value="InterPro"/>
</dbReference>
<dbReference type="GO" id="GO:0046872">
    <property type="term" value="F:metal ion binding"/>
    <property type="evidence" value="ECO:0007669"/>
    <property type="project" value="UniProtKB-KW"/>
</dbReference>
<dbReference type="GO" id="GO:0019646">
    <property type="term" value="P:aerobic electron transport chain"/>
    <property type="evidence" value="ECO:0007669"/>
    <property type="project" value="InterPro"/>
</dbReference>
<dbReference type="Gene3D" id="4.10.490.10">
    <property type="entry name" value="High potential iron-sulphur protein"/>
    <property type="match status" value="1"/>
</dbReference>
<dbReference type="InterPro" id="IPR000170">
    <property type="entry name" value="High_potential_FeS_prot"/>
</dbReference>
<dbReference type="InterPro" id="IPR036369">
    <property type="entry name" value="HIPIP_sf"/>
</dbReference>
<dbReference type="Pfam" id="PF01355">
    <property type="entry name" value="HIPIP"/>
    <property type="match status" value="1"/>
</dbReference>
<dbReference type="SUPFAM" id="SSF57652">
    <property type="entry name" value="HIPIP (high potential iron protein)"/>
    <property type="match status" value="1"/>
</dbReference>
<dbReference type="PROSITE" id="PS51373">
    <property type="entry name" value="HIPIP"/>
    <property type="match status" value="1"/>
</dbReference>
<sequence length="72" mass="7691">AERLDENSPEALALNYKHDGASVDHPSHAAGQKCINCLLYTDPSATEWGGCAVFPNKLVNANGWCTAYVARG</sequence>
<organism>
    <name type="scientific">Ectothiorhodospira shaposhnikovii</name>
    <name type="common">Ectothiorhodospira vacuolata</name>
    <dbReference type="NCBI Taxonomy" id="1054"/>
    <lineage>
        <taxon>Bacteria</taxon>
        <taxon>Pseudomonadati</taxon>
        <taxon>Pseudomonadota</taxon>
        <taxon>Gammaproteobacteria</taxon>
        <taxon>Chromatiales</taxon>
        <taxon>Ectothiorhodospiraceae</taxon>
        <taxon>Ectothiorhodospira</taxon>
    </lineage>
</organism>
<keyword id="KW-0004">4Fe-4S</keyword>
<keyword id="KW-0903">Direct protein sequencing</keyword>
<keyword id="KW-0249">Electron transport</keyword>
<keyword id="KW-0408">Iron</keyword>
<keyword id="KW-0411">Iron-sulfur</keyword>
<keyword id="KW-0479">Metal-binding</keyword>
<keyword id="KW-0813">Transport</keyword>
<accession>P38941</accession>
<proteinExistence type="evidence at protein level"/>
<comment type="function">
    <text>Specific class of high-redox-potential 4Fe-4S ferredoxins. Functions in anaerobic electron transport in most purple and in some other photosynthetic bacteria and in at least one genus (Paracoccus) of halophilic, denitrifying bacteria.</text>
</comment>
<comment type="biophysicochemical properties">
    <redoxPotential>
        <text>E(0) is +260 mV.</text>
    </redoxPotential>
</comment>
<comment type="subunit">
    <text evidence="2">Homodimer.</text>
</comment>
<comment type="similarity">
    <text evidence="1">Belongs to the high-potential iron-sulfur protein (HiPIP) family.</text>
</comment>
<gene>
    <name type="primary">hip1</name>
</gene>
<feature type="chain" id="PRO_0000220420" description="High-potential iron-sulfur protein isozyme 1">
    <location>
        <begin position="1"/>
        <end position="72"/>
    </location>
</feature>
<feature type="binding site" evidence="1">
    <location>
        <position position="34"/>
    </location>
    <ligand>
        <name>[4Fe-4S] cluster</name>
        <dbReference type="ChEBI" id="CHEBI:49883"/>
    </ligand>
</feature>
<feature type="binding site" evidence="1">
    <location>
        <position position="37"/>
    </location>
    <ligand>
        <name>[4Fe-4S] cluster</name>
        <dbReference type="ChEBI" id="CHEBI:49883"/>
    </ligand>
</feature>
<feature type="binding site" evidence="1">
    <location>
        <position position="51"/>
    </location>
    <ligand>
        <name>[4Fe-4S] cluster</name>
        <dbReference type="ChEBI" id="CHEBI:49883"/>
    </ligand>
</feature>
<feature type="binding site" evidence="1">
    <location>
        <position position="65"/>
    </location>
    <ligand>
        <name>[4Fe-4S] cluster</name>
        <dbReference type="ChEBI" id="CHEBI:49883"/>
    </ligand>
</feature>
<name>HIP1_ECTSH</name>
<protein>
    <recommendedName>
        <fullName>High-potential iron-sulfur protein isozyme 1</fullName>
        <shortName>HiPIP 1</shortName>
    </recommendedName>
</protein>
<evidence type="ECO:0000255" key="1">
    <source>
        <dbReference type="PROSITE-ProRule" id="PRU00705"/>
    </source>
</evidence>
<evidence type="ECO:0000305" key="2"/>
<reference key="1">
    <citation type="journal article" date="1994" name="Arch. Biochem. Biophys.">
        <title>Amino acid sequences of two high-potential iron sulfur proteins (HiPIPs) from the moderately halophilic purple phototrophic bacterium Ectothiorhodospira vacuolata.</title>
        <authorList>
            <person name="Ambler R.P."/>
            <person name="Meyer T.E."/>
            <person name="Kamen M.D."/>
        </authorList>
    </citation>
    <scope>PROTEIN SEQUENCE</scope>
    <source>
        <strain>ATCC 43036 / DSM 2111 / Beta-1 / BN 9512</strain>
    </source>
</reference>